<organism>
    <name type="scientific">Sphingomonas sp. (strain SKA58)</name>
    <dbReference type="NCBI Taxonomy" id="314266"/>
    <lineage>
        <taxon>Bacteria</taxon>
        <taxon>Pseudomonadati</taxon>
        <taxon>Pseudomonadota</taxon>
        <taxon>Alphaproteobacteria</taxon>
        <taxon>Sphingomonadales</taxon>
        <taxon>Sphingomonadaceae</taxon>
        <taxon>Sphingomonas</taxon>
    </lineage>
</organism>
<protein>
    <recommendedName>
        <fullName evidence="4">2-dehydro-3-deoxy-L-rhamnonate dehydrogenase (NAD(+))</fullName>
        <ecNumber evidence="2">1.1.1.401</ecNumber>
    </recommendedName>
    <alternativeName>
        <fullName evidence="3">2-keto-3-deoxy-L-rhamnonate dehydrogenase</fullName>
        <shortName>KDRDH</shortName>
        <shortName evidence="3">L-KDR dehydrogenase</shortName>
    </alternativeName>
    <alternativeName>
        <fullName evidence="3">L-KDR 4-dehydrogenase</fullName>
    </alternativeName>
</protein>
<feature type="initiator methionine" description="Removed" evidence="2">
    <location>
        <position position="1"/>
    </location>
</feature>
<feature type="chain" id="PRO_0000438496" description="2-dehydro-3-deoxy-L-rhamnonate dehydrogenase (NAD(+))">
    <location>
        <begin position="2"/>
        <end position="249"/>
    </location>
</feature>
<feature type="active site" description="Proton acceptor" evidence="1">
    <location>
        <position position="156"/>
    </location>
</feature>
<sequence>MSVFAGRYAGRCAIVTGGASGLGKQVAARIIAEGGAVALWDLNGDALAATQAEIDATHVVALDVSDHAAVAAAAKDSAAALGKVDILICSAGITGATVPVWEFPVDSFQRVIDINLNGLFYCNREVVPFMLENGYGRIVNLASVAGKEGNPNASAYSASKAGVIGFTKSLGKELAGKGVIANALTPATFESPILDQLPQSQVDYMRSKIPMGRLGLVEESAAMVCFMASEECSFTTASTFDTSGGRTTF</sequence>
<name>KDRDH_SPHSS</name>
<accession>Q1NEI6</accession>
<reference key="1">
    <citation type="submission" date="2006-03" db="EMBL/GenBank/DDBJ databases">
        <authorList>
            <person name="Hagstrom A."/>
            <person name="Ferriera S."/>
            <person name="Johnson J."/>
            <person name="Kravitz S."/>
            <person name="Halpern A."/>
            <person name="Remington K."/>
            <person name="Beeson K."/>
            <person name="Tran B."/>
            <person name="Rogers Y.-H."/>
            <person name="Friedman R."/>
            <person name="Venter J.C."/>
        </authorList>
    </citation>
    <scope>NUCLEOTIDE SEQUENCE [LARGE SCALE GENOMIC DNA]</scope>
    <source>
        <strain>SKA58</strain>
    </source>
</reference>
<reference key="2">
    <citation type="journal article" date="2009" name="FEBS J.">
        <title>Novel modified version of nonphosphorylated sugar metabolism--an alternative L-rhamnose pathway of Sphingomonas sp.</title>
        <authorList>
            <person name="Watanabe S."/>
            <person name="Makino K."/>
        </authorList>
    </citation>
    <scope>PROTEIN SEQUENCE OF 2-20</scope>
    <scope>FUNCTION</scope>
    <scope>CATALYTIC ACTIVITY</scope>
    <scope>SUBSTRATE SPECIFICITY</scope>
    <scope>BIOPHYSICOCHEMICAL PROPERTIES</scope>
    <scope>SUBUNIT</scope>
    <scope>PATHWAY</scope>
    <source>
        <strain>NBRC 101715</strain>
    </source>
</reference>
<dbReference type="EC" id="1.1.1.401" evidence="2"/>
<dbReference type="EMBL" id="AAQG01000004">
    <property type="protein sequence ID" value="EAT09364.1"/>
    <property type="molecule type" value="Genomic_DNA"/>
</dbReference>
<dbReference type="RefSeq" id="WP_009820502.1">
    <property type="nucleotide sequence ID" value="NZ_CH959306.1"/>
</dbReference>
<dbReference type="SMR" id="Q1NEI6"/>
<dbReference type="STRING" id="314266.SKA58_03590"/>
<dbReference type="KEGG" id="ag:EAT09364"/>
<dbReference type="eggNOG" id="COG1028">
    <property type="taxonomic scope" value="Bacteria"/>
</dbReference>
<dbReference type="HOGENOM" id="CLU_010194_1_3_5"/>
<dbReference type="OrthoDB" id="9803333at2"/>
<dbReference type="BioCyc" id="MetaCyc:MONOMER-16233"/>
<dbReference type="BRENDA" id="1.1.1.401">
    <property type="organism ID" value="5801"/>
</dbReference>
<dbReference type="UniPathway" id="UPA00541"/>
<dbReference type="Proteomes" id="UP000005395">
    <property type="component" value="Unassembled WGS sequence"/>
</dbReference>
<dbReference type="GO" id="GO:0016616">
    <property type="term" value="F:oxidoreductase activity, acting on the CH-OH group of donors, NAD or NADP as acceptor"/>
    <property type="evidence" value="ECO:0007669"/>
    <property type="project" value="TreeGrafter"/>
</dbReference>
<dbReference type="GO" id="GO:0019301">
    <property type="term" value="P:rhamnose catabolic process"/>
    <property type="evidence" value="ECO:0007669"/>
    <property type="project" value="UniProtKB-UniPathway"/>
</dbReference>
<dbReference type="FunFam" id="3.40.50.720:FF:000084">
    <property type="entry name" value="Short-chain dehydrogenase reductase"/>
    <property type="match status" value="1"/>
</dbReference>
<dbReference type="Gene3D" id="3.40.50.720">
    <property type="entry name" value="NAD(P)-binding Rossmann-like Domain"/>
    <property type="match status" value="1"/>
</dbReference>
<dbReference type="InterPro" id="IPR036291">
    <property type="entry name" value="NAD(P)-bd_dom_sf"/>
</dbReference>
<dbReference type="InterPro" id="IPR020904">
    <property type="entry name" value="Sc_DH/Rdtase_CS"/>
</dbReference>
<dbReference type="InterPro" id="IPR002347">
    <property type="entry name" value="SDR_fam"/>
</dbReference>
<dbReference type="PANTHER" id="PTHR42760:SF133">
    <property type="entry name" value="3-OXOACYL-[ACYL-CARRIER-PROTEIN] REDUCTASE"/>
    <property type="match status" value="1"/>
</dbReference>
<dbReference type="PANTHER" id="PTHR42760">
    <property type="entry name" value="SHORT-CHAIN DEHYDROGENASES/REDUCTASES FAMILY MEMBER"/>
    <property type="match status" value="1"/>
</dbReference>
<dbReference type="Pfam" id="PF13561">
    <property type="entry name" value="adh_short_C2"/>
    <property type="match status" value="1"/>
</dbReference>
<dbReference type="PRINTS" id="PR00081">
    <property type="entry name" value="GDHRDH"/>
</dbReference>
<dbReference type="PRINTS" id="PR00080">
    <property type="entry name" value="SDRFAMILY"/>
</dbReference>
<dbReference type="SUPFAM" id="SSF51735">
    <property type="entry name" value="NAD(P)-binding Rossmann-fold domains"/>
    <property type="match status" value="1"/>
</dbReference>
<dbReference type="PROSITE" id="PS00061">
    <property type="entry name" value="ADH_SHORT"/>
    <property type="match status" value="1"/>
</dbReference>
<keyword id="KW-0119">Carbohydrate metabolism</keyword>
<keyword id="KW-0903">Direct protein sequencing</keyword>
<keyword id="KW-0520">NAD</keyword>
<keyword id="KW-0560">Oxidoreductase</keyword>
<keyword id="KW-1185">Reference proteome</keyword>
<keyword id="KW-0684">Rhamnose metabolism</keyword>
<comment type="function">
    <text evidence="2">Catalyzes the NAD(+)-dependent dehydrogenation of 2-dehydro-3-deoxy-L-rhamnonate to form 2,4-didehydro-3-deoxy-L-rhamnonate. Does not show any detectable activity in the presence of NADP(+) (PubMed:19187228). Catalyzes the fourth step in an alternative pathway for rhamnose utilization that does not involve phosphorylated intermediates (PubMed:19187228).</text>
</comment>
<comment type="catalytic activity">
    <reaction evidence="2">
        <text>2-dehydro-3-deoxy-L-rhamnonate + NAD(+) = 2,4-didehydro-3-deoxy-L-rhamnonate + NADH + H(+)</text>
        <dbReference type="Rhea" id="RHEA:36499"/>
        <dbReference type="ChEBI" id="CHEBI:15378"/>
        <dbReference type="ChEBI" id="CHEBI:57540"/>
        <dbReference type="ChEBI" id="CHEBI:57945"/>
        <dbReference type="ChEBI" id="CHEBI:58371"/>
        <dbReference type="ChEBI" id="CHEBI:131847"/>
        <dbReference type="EC" id="1.1.1.401"/>
    </reaction>
    <physiologicalReaction direction="left-to-right" evidence="2">
        <dbReference type="Rhea" id="RHEA:36500"/>
    </physiologicalReaction>
</comment>
<comment type="biophysicochemical properties">
    <kinetics>
        <KM evidence="2">0.65 mM for 2-dehydro-3-deoxy-L-rhamnonate</KM>
        <KM evidence="2">1.27 mM for 2-dehydro-3-deoxy-L-lyxonate</KM>
        <KM evidence="2">1.9 mM for 2-dehydro-3-deoxy-L-mannonate</KM>
        <text evidence="2">kcat is 51.8 min(-1) with 2-dehydro-3-deoxy-L-rhamnonate as substrate. kcat is 11 min(-1) with 2-dehydro-3-deoxy-L-lyxonate as substrate. kcat is 0.72 min(-1) with 2-dehydro-3-deoxy-L-mannonate as substrate.</text>
    </kinetics>
</comment>
<comment type="pathway">
    <text evidence="5">Carbohydrate degradation; L-rhamnose degradation.</text>
</comment>
<comment type="subunit">
    <text evidence="2">Homotetramer.</text>
</comment>
<comment type="similarity">
    <text evidence="4">Belongs to the short-chain dehydrogenases/reductases (SDR) family.</text>
</comment>
<proteinExistence type="evidence at protein level"/>
<evidence type="ECO:0000255" key="1">
    <source>
        <dbReference type="PROSITE-ProRule" id="PRU10001"/>
    </source>
</evidence>
<evidence type="ECO:0000269" key="2">
    <source>
    </source>
</evidence>
<evidence type="ECO:0000303" key="3">
    <source>
    </source>
</evidence>
<evidence type="ECO:0000305" key="4"/>
<evidence type="ECO:0000305" key="5">
    <source>
    </source>
</evidence>
<gene>
    <name evidence="3" type="primary">LRA5</name>
    <name type="ORF">SKA58_03590</name>
</gene>